<protein>
    <recommendedName>
        <fullName evidence="1">Type III pantothenate kinase</fullName>
        <ecNumber evidence="1">2.7.1.33</ecNumber>
    </recommendedName>
    <alternativeName>
        <fullName evidence="1">PanK-III</fullName>
    </alternativeName>
    <alternativeName>
        <fullName evidence="1">Pantothenic acid kinase</fullName>
    </alternativeName>
</protein>
<accession>B1Y6R5</accession>
<keyword id="KW-0067">ATP-binding</keyword>
<keyword id="KW-0173">Coenzyme A biosynthesis</keyword>
<keyword id="KW-0963">Cytoplasm</keyword>
<keyword id="KW-0418">Kinase</keyword>
<keyword id="KW-0547">Nucleotide-binding</keyword>
<keyword id="KW-0630">Potassium</keyword>
<keyword id="KW-1185">Reference proteome</keyword>
<keyword id="KW-0808">Transferase</keyword>
<name>COAX_LEPCP</name>
<comment type="function">
    <text evidence="1">Catalyzes the phosphorylation of pantothenate (Pan), the first step in CoA biosynthesis.</text>
</comment>
<comment type="catalytic activity">
    <reaction evidence="1">
        <text>(R)-pantothenate + ATP = (R)-4'-phosphopantothenate + ADP + H(+)</text>
        <dbReference type="Rhea" id="RHEA:16373"/>
        <dbReference type="ChEBI" id="CHEBI:10986"/>
        <dbReference type="ChEBI" id="CHEBI:15378"/>
        <dbReference type="ChEBI" id="CHEBI:29032"/>
        <dbReference type="ChEBI" id="CHEBI:30616"/>
        <dbReference type="ChEBI" id="CHEBI:456216"/>
        <dbReference type="EC" id="2.7.1.33"/>
    </reaction>
</comment>
<comment type="cofactor">
    <cofactor evidence="1">
        <name>NH4(+)</name>
        <dbReference type="ChEBI" id="CHEBI:28938"/>
    </cofactor>
    <cofactor evidence="1">
        <name>K(+)</name>
        <dbReference type="ChEBI" id="CHEBI:29103"/>
    </cofactor>
    <text evidence="1">A monovalent cation. Ammonium or potassium.</text>
</comment>
<comment type="pathway">
    <text evidence="1">Cofactor biosynthesis; coenzyme A biosynthesis; CoA from (R)-pantothenate: step 1/5.</text>
</comment>
<comment type="subunit">
    <text evidence="1">Homodimer.</text>
</comment>
<comment type="subcellular location">
    <subcellularLocation>
        <location evidence="1">Cytoplasm</location>
    </subcellularLocation>
</comment>
<comment type="similarity">
    <text evidence="1">Belongs to the type III pantothenate kinase family.</text>
</comment>
<organism>
    <name type="scientific">Leptothrix cholodnii (strain ATCC 51168 / LMG 8142 / SP-6)</name>
    <name type="common">Leptothrix discophora (strain SP-6)</name>
    <dbReference type="NCBI Taxonomy" id="395495"/>
    <lineage>
        <taxon>Bacteria</taxon>
        <taxon>Pseudomonadati</taxon>
        <taxon>Pseudomonadota</taxon>
        <taxon>Betaproteobacteria</taxon>
        <taxon>Burkholderiales</taxon>
        <taxon>Sphaerotilaceae</taxon>
        <taxon>Leptothrix</taxon>
    </lineage>
</organism>
<gene>
    <name evidence="1" type="primary">coaX</name>
    <name type="ordered locus">Lcho_3839</name>
</gene>
<evidence type="ECO:0000255" key="1">
    <source>
        <dbReference type="HAMAP-Rule" id="MF_01274"/>
    </source>
</evidence>
<feature type="chain" id="PRO_1000140247" description="Type III pantothenate kinase">
    <location>
        <begin position="1"/>
        <end position="262"/>
    </location>
</feature>
<feature type="active site" description="Proton acceptor" evidence="1">
    <location>
        <position position="105"/>
    </location>
</feature>
<feature type="binding site" evidence="1">
    <location>
        <begin position="7"/>
        <end position="14"/>
    </location>
    <ligand>
        <name>ATP</name>
        <dbReference type="ChEBI" id="CHEBI:30616"/>
    </ligand>
</feature>
<feature type="binding site" evidence="1">
    <location>
        <position position="96"/>
    </location>
    <ligand>
        <name>substrate</name>
    </ligand>
</feature>
<feature type="binding site" evidence="1">
    <location>
        <begin position="103"/>
        <end position="106"/>
    </location>
    <ligand>
        <name>substrate</name>
    </ligand>
</feature>
<feature type="binding site" evidence="1">
    <location>
        <position position="137"/>
    </location>
    <ligand>
        <name>ATP</name>
        <dbReference type="ChEBI" id="CHEBI:30616"/>
    </ligand>
</feature>
<feature type="binding site" evidence="1">
    <location>
        <position position="187"/>
    </location>
    <ligand>
        <name>substrate</name>
    </ligand>
</feature>
<reference key="1">
    <citation type="submission" date="2008-03" db="EMBL/GenBank/DDBJ databases">
        <title>Complete sequence of Leptothrix cholodnii SP-6.</title>
        <authorList>
            <consortium name="US DOE Joint Genome Institute"/>
            <person name="Copeland A."/>
            <person name="Lucas S."/>
            <person name="Lapidus A."/>
            <person name="Glavina del Rio T."/>
            <person name="Dalin E."/>
            <person name="Tice H."/>
            <person name="Bruce D."/>
            <person name="Goodwin L."/>
            <person name="Pitluck S."/>
            <person name="Chertkov O."/>
            <person name="Brettin T."/>
            <person name="Detter J.C."/>
            <person name="Han C."/>
            <person name="Kuske C.R."/>
            <person name="Schmutz J."/>
            <person name="Larimer F."/>
            <person name="Land M."/>
            <person name="Hauser L."/>
            <person name="Kyrpides N."/>
            <person name="Lykidis A."/>
            <person name="Emerson D."/>
            <person name="Richardson P."/>
        </authorList>
    </citation>
    <scope>NUCLEOTIDE SEQUENCE [LARGE SCALE GENOMIC DNA]</scope>
    <source>
        <strain>ATCC 51168 / LMG 8142 / SP-6</strain>
    </source>
</reference>
<proteinExistence type="inferred from homology"/>
<dbReference type="EC" id="2.7.1.33" evidence="1"/>
<dbReference type="EMBL" id="CP001013">
    <property type="protein sequence ID" value="ACB36093.1"/>
    <property type="molecule type" value="Genomic_DNA"/>
</dbReference>
<dbReference type="RefSeq" id="WP_012348840.1">
    <property type="nucleotide sequence ID" value="NC_010524.1"/>
</dbReference>
<dbReference type="SMR" id="B1Y6R5"/>
<dbReference type="STRING" id="395495.Lcho_3839"/>
<dbReference type="KEGG" id="lch:Lcho_3839"/>
<dbReference type="eggNOG" id="COG1521">
    <property type="taxonomic scope" value="Bacteria"/>
</dbReference>
<dbReference type="HOGENOM" id="CLU_066627_0_0_4"/>
<dbReference type="OrthoDB" id="9781305at2"/>
<dbReference type="UniPathway" id="UPA00241">
    <property type="reaction ID" value="UER00352"/>
</dbReference>
<dbReference type="Proteomes" id="UP000001693">
    <property type="component" value="Chromosome"/>
</dbReference>
<dbReference type="GO" id="GO:0005737">
    <property type="term" value="C:cytoplasm"/>
    <property type="evidence" value="ECO:0007669"/>
    <property type="project" value="UniProtKB-SubCell"/>
</dbReference>
<dbReference type="GO" id="GO:0005524">
    <property type="term" value="F:ATP binding"/>
    <property type="evidence" value="ECO:0007669"/>
    <property type="project" value="UniProtKB-UniRule"/>
</dbReference>
<dbReference type="GO" id="GO:0004594">
    <property type="term" value="F:pantothenate kinase activity"/>
    <property type="evidence" value="ECO:0007669"/>
    <property type="project" value="UniProtKB-UniRule"/>
</dbReference>
<dbReference type="GO" id="GO:0015937">
    <property type="term" value="P:coenzyme A biosynthetic process"/>
    <property type="evidence" value="ECO:0007669"/>
    <property type="project" value="UniProtKB-UniRule"/>
</dbReference>
<dbReference type="CDD" id="cd24015">
    <property type="entry name" value="ASKHA_NBD_PanK-III"/>
    <property type="match status" value="1"/>
</dbReference>
<dbReference type="Gene3D" id="3.30.420.40">
    <property type="match status" value="2"/>
</dbReference>
<dbReference type="HAMAP" id="MF_01274">
    <property type="entry name" value="Pantothen_kinase_3"/>
    <property type="match status" value="1"/>
</dbReference>
<dbReference type="InterPro" id="IPR043129">
    <property type="entry name" value="ATPase_NBD"/>
</dbReference>
<dbReference type="InterPro" id="IPR004619">
    <property type="entry name" value="Type_III_PanK"/>
</dbReference>
<dbReference type="NCBIfam" id="TIGR00671">
    <property type="entry name" value="baf"/>
    <property type="match status" value="1"/>
</dbReference>
<dbReference type="PANTHER" id="PTHR34265">
    <property type="entry name" value="TYPE III PANTOTHENATE KINASE"/>
    <property type="match status" value="1"/>
</dbReference>
<dbReference type="PANTHER" id="PTHR34265:SF1">
    <property type="entry name" value="TYPE III PANTOTHENATE KINASE"/>
    <property type="match status" value="1"/>
</dbReference>
<dbReference type="Pfam" id="PF03309">
    <property type="entry name" value="Pan_kinase"/>
    <property type="match status" value="1"/>
</dbReference>
<dbReference type="SUPFAM" id="SSF53067">
    <property type="entry name" value="Actin-like ATPase domain"/>
    <property type="match status" value="2"/>
</dbReference>
<sequence length="262" mass="27639">MSFLAIDIGNTRLKWGLYDAAKPGARLLAHGAVFLETIEQLAEQDWARLPHPTAMLGCAVAGDAVRRRTEEQLELWDLTPHWVVSQPVGGGIVNGYDHPSRLGSDRWVAMVGARERILEQTGPGARPVPAIVVMVGTAVTVDAVDPDGCFIGGLILPGFGLMLKALEMGTAGLRVPTGDVCEFPTNTSDALMSGGACGIAGAIERMHRQLQQRCGVAPRILMSGGAATKLAQIMALPVEVVDTLVFDGLLRLASDRVAAGLA</sequence>